<dbReference type="EC" id="3.1.1.96" evidence="1"/>
<dbReference type="EMBL" id="CP000660">
    <property type="protein sequence ID" value="ABP51098.1"/>
    <property type="molecule type" value="Genomic_DNA"/>
</dbReference>
<dbReference type="SMR" id="A4WL31"/>
<dbReference type="STRING" id="340102.Pars_1544"/>
<dbReference type="KEGG" id="pas:Pars_1544"/>
<dbReference type="HOGENOM" id="CLU_056464_1_0_2"/>
<dbReference type="OrthoDB" id="9863at2157"/>
<dbReference type="PhylomeDB" id="A4WL31"/>
<dbReference type="Proteomes" id="UP000001567">
    <property type="component" value="Chromosome"/>
</dbReference>
<dbReference type="GO" id="GO:0051499">
    <property type="term" value="F:D-aminoacyl-tRNA deacylase activity"/>
    <property type="evidence" value="ECO:0007669"/>
    <property type="project" value="UniProtKB-UniRule"/>
</dbReference>
<dbReference type="GO" id="GO:0008270">
    <property type="term" value="F:zinc ion binding"/>
    <property type="evidence" value="ECO:0007669"/>
    <property type="project" value="UniProtKB-UniRule"/>
</dbReference>
<dbReference type="GO" id="GO:0019478">
    <property type="term" value="P:D-amino acid catabolic process"/>
    <property type="evidence" value="ECO:0007669"/>
    <property type="project" value="UniProtKB-UniRule"/>
</dbReference>
<dbReference type="Gene3D" id="3.40.50.10700">
    <property type="entry name" value="AF0625-like"/>
    <property type="match status" value="1"/>
</dbReference>
<dbReference type="Gene3D" id="3.40.630.50">
    <property type="entry name" value="AF0625-like"/>
    <property type="match status" value="1"/>
</dbReference>
<dbReference type="HAMAP" id="MF_00562">
    <property type="entry name" value="Deacylase_DtdA"/>
    <property type="match status" value="1"/>
</dbReference>
<dbReference type="InterPro" id="IPR018033">
    <property type="entry name" value="Deacylase_DtdA_archaea"/>
</dbReference>
<dbReference type="InterPro" id="IPR007508">
    <property type="entry name" value="DtdA"/>
</dbReference>
<dbReference type="PANTHER" id="PTHR34667">
    <property type="entry name" value="D-AMINOACYL-TRNA DEACYLASE"/>
    <property type="match status" value="1"/>
</dbReference>
<dbReference type="PANTHER" id="PTHR34667:SF1">
    <property type="entry name" value="D-AMINOACYL-TRNA DEACYLASE"/>
    <property type="match status" value="1"/>
</dbReference>
<dbReference type="Pfam" id="PF04414">
    <property type="entry name" value="tRNA_deacylase"/>
    <property type="match status" value="1"/>
</dbReference>
<dbReference type="SUPFAM" id="SSF142535">
    <property type="entry name" value="AF0625-like"/>
    <property type="match status" value="1"/>
</dbReference>
<proteinExistence type="inferred from homology"/>
<reference key="1">
    <citation type="submission" date="2007-04" db="EMBL/GenBank/DDBJ databases">
        <title>Complete sequence of Pyrobaculum arsenaticum DSM 13514.</title>
        <authorList>
            <consortium name="US DOE Joint Genome Institute"/>
            <person name="Copeland A."/>
            <person name="Lucas S."/>
            <person name="Lapidus A."/>
            <person name="Barry K."/>
            <person name="Glavina del Rio T."/>
            <person name="Dalin E."/>
            <person name="Tice H."/>
            <person name="Pitluck S."/>
            <person name="Chain P."/>
            <person name="Malfatti S."/>
            <person name="Shin M."/>
            <person name="Vergez L."/>
            <person name="Schmutz J."/>
            <person name="Larimer F."/>
            <person name="Land M."/>
            <person name="Hauser L."/>
            <person name="Kyrpides N."/>
            <person name="Mikhailova N."/>
            <person name="Cozen A.E."/>
            <person name="Fitz-Gibbon S.T."/>
            <person name="House C.H."/>
            <person name="Saltikov C."/>
            <person name="Lowe T.M."/>
            <person name="Richardson P."/>
        </authorList>
    </citation>
    <scope>NUCLEOTIDE SEQUENCE [LARGE SCALE GENOMIC DNA]</scope>
    <source>
        <strain>ATCC 700994 / DSM 13514 / JCM 11321 / PZ6</strain>
    </source>
</reference>
<organism>
    <name type="scientific">Pyrobaculum arsenaticum (strain DSM 13514 / JCM 11321 / PZ6)</name>
    <dbReference type="NCBI Taxonomy" id="340102"/>
    <lineage>
        <taxon>Archaea</taxon>
        <taxon>Thermoproteota</taxon>
        <taxon>Thermoprotei</taxon>
        <taxon>Thermoproteales</taxon>
        <taxon>Thermoproteaceae</taxon>
        <taxon>Pyrobaculum</taxon>
    </lineage>
</organism>
<name>DTDA_PYRAR</name>
<feature type="chain" id="PRO_0000345227" description="D-aminoacyl-tRNA deacylase">
    <location>
        <begin position="1"/>
        <end position="252"/>
    </location>
</feature>
<keyword id="KW-0378">Hydrolase</keyword>
<keyword id="KW-0479">Metal-binding</keyword>
<keyword id="KW-0862">Zinc</keyword>
<protein>
    <recommendedName>
        <fullName evidence="1">D-aminoacyl-tRNA deacylase</fullName>
        <ecNumber evidence="1">3.1.1.96</ecNumber>
    </recommendedName>
    <alternativeName>
        <fullName>D-tyrosyl-tRNA(Tyr) deacylase</fullName>
    </alternativeName>
</protein>
<accession>A4WL31</accession>
<gene>
    <name evidence="1" type="primary">dtdA</name>
    <name type="ordered locus">Pars_1544</name>
</gene>
<sequence>MYIIIVSLADPVSRAFLELMGDLPLVETRGDLEIRRLRDTPVVVYRGEPTSFDKEDVLLSVGKHAVFISRHEMANPRPIFTVHTPGSWPDVSVSNPHLASAVLRALCNRLYEPFECAYEATHHTPNTAHISATFVEVGSTDREWGDRKAVGTLLEALEEVLNSPLEEHTPAMVIGDLHYTTVKESALRKEVDIGHVVPKYVEITPAAVETALRKHTVPIKRAILFRKNVKNPARGEILQMLRDRGVEVVLKG</sequence>
<comment type="function">
    <text evidence="1">D-aminoacyl-tRNA deacylase with broad substrate specificity. By recycling D-aminoacyl-tRNA to D-amino acids and free tRNA molecules, this enzyme counteracts the toxicity associated with the formation of D-aminoacyl-tRNA entities in vivo.</text>
</comment>
<comment type="catalytic activity">
    <reaction evidence="1">
        <text>a D-aminoacyl-tRNA + H2O = a tRNA + a D-alpha-amino acid + H(+)</text>
        <dbReference type="Rhea" id="RHEA:13953"/>
        <dbReference type="Rhea" id="RHEA-COMP:10123"/>
        <dbReference type="Rhea" id="RHEA-COMP:10124"/>
        <dbReference type="ChEBI" id="CHEBI:15377"/>
        <dbReference type="ChEBI" id="CHEBI:15378"/>
        <dbReference type="ChEBI" id="CHEBI:59871"/>
        <dbReference type="ChEBI" id="CHEBI:78442"/>
        <dbReference type="ChEBI" id="CHEBI:79333"/>
        <dbReference type="EC" id="3.1.1.96"/>
    </reaction>
</comment>
<comment type="catalytic activity">
    <reaction evidence="1">
        <text>glycyl-tRNA(Ala) + H2O = tRNA(Ala) + glycine + H(+)</text>
        <dbReference type="Rhea" id="RHEA:53744"/>
        <dbReference type="Rhea" id="RHEA-COMP:9657"/>
        <dbReference type="Rhea" id="RHEA-COMP:13640"/>
        <dbReference type="ChEBI" id="CHEBI:15377"/>
        <dbReference type="ChEBI" id="CHEBI:15378"/>
        <dbReference type="ChEBI" id="CHEBI:57305"/>
        <dbReference type="ChEBI" id="CHEBI:78442"/>
        <dbReference type="ChEBI" id="CHEBI:78522"/>
        <dbReference type="EC" id="3.1.1.96"/>
    </reaction>
</comment>
<comment type="cofactor">
    <cofactor evidence="1">
        <name>Zn(2+)</name>
        <dbReference type="ChEBI" id="CHEBI:29105"/>
    </cofactor>
    <text evidence="1">Binds 2 Zn(2+) ions per subunit.</text>
</comment>
<comment type="subunit">
    <text evidence="1">Monomer.</text>
</comment>
<comment type="similarity">
    <text evidence="1">Belongs to the DtdA deacylase family.</text>
</comment>
<evidence type="ECO:0000255" key="1">
    <source>
        <dbReference type="HAMAP-Rule" id="MF_00562"/>
    </source>
</evidence>